<protein>
    <recommendedName>
        <fullName evidence="1">Multifunctional CCA protein</fullName>
    </recommendedName>
    <domain>
        <recommendedName>
            <fullName evidence="1">CCA-adding enzyme</fullName>
            <ecNumber evidence="1">2.7.7.72</ecNumber>
        </recommendedName>
        <alternativeName>
            <fullName evidence="1">CCA tRNA nucleotidyltransferase</fullName>
        </alternativeName>
        <alternativeName>
            <fullName evidence="1">tRNA CCA-pyrophosphorylase</fullName>
        </alternativeName>
        <alternativeName>
            <fullName evidence="1">tRNA adenylyl-/cytidylyl-transferase</fullName>
        </alternativeName>
        <alternativeName>
            <fullName evidence="1">tRNA nucleotidyltransferase</fullName>
        </alternativeName>
        <alternativeName>
            <fullName evidence="1">tRNA-NT</fullName>
        </alternativeName>
    </domain>
    <domain>
        <recommendedName>
            <fullName evidence="1">2'-nucleotidase</fullName>
            <ecNumber evidence="1">3.1.3.-</ecNumber>
        </recommendedName>
    </domain>
    <domain>
        <recommendedName>
            <fullName evidence="1">2',3'-cyclic phosphodiesterase</fullName>
            <ecNumber evidence="1">3.1.4.-</ecNumber>
        </recommendedName>
    </domain>
    <domain>
        <recommendedName>
            <fullName evidence="1">Phosphatase</fullName>
            <ecNumber evidence="1">3.1.3.-</ecNumber>
        </recommendedName>
    </domain>
</protein>
<sequence length="409" mass="45919">MRIYKVGGAVRDRLLGRPVTDIDWVVVGASAEEMLAKGFRPVGADFPVFLHPKSGEEYALARTERKSGRGYSGFTFHASPEVTLEEDLIRRDLTINAMAEDEQGRLTDPYNGQKDLEERLLRHVSPAFAEDPLRVLRVARFAARYAGLGFRVAPETLELMRELSESGELQALTAERSWKEISRALMEDQPQVFIQVLRDCGALAVLMPEIDALFGVPQPAVHHPEIDTGAHTLSVLLQAALHQQPLSVRWACLLHDLGKGLTPEEEWPRHIGHERTGLELIKAVNERFKAPRECQELALLVGQYHTHGHKALELKASTLLELLQSFDVFRRPQRFEEFIAACEMDARGRLGLESRPYPQADYLRGAAEAARKVAVQPLLEQGFKGPQLGEALRLERLKAIKAYKEQHAP</sequence>
<feature type="chain" id="PRO_1000054283" description="Multifunctional CCA protein">
    <location>
        <begin position="1"/>
        <end position="409"/>
    </location>
</feature>
<feature type="domain" description="HD" evidence="1">
    <location>
        <begin position="228"/>
        <end position="329"/>
    </location>
</feature>
<feature type="binding site" evidence="1">
    <location>
        <position position="8"/>
    </location>
    <ligand>
        <name>ATP</name>
        <dbReference type="ChEBI" id="CHEBI:30616"/>
    </ligand>
</feature>
<feature type="binding site" evidence="1">
    <location>
        <position position="8"/>
    </location>
    <ligand>
        <name>CTP</name>
        <dbReference type="ChEBI" id="CHEBI:37563"/>
    </ligand>
</feature>
<feature type="binding site" evidence="1">
    <location>
        <position position="11"/>
    </location>
    <ligand>
        <name>ATP</name>
        <dbReference type="ChEBI" id="CHEBI:30616"/>
    </ligand>
</feature>
<feature type="binding site" evidence="1">
    <location>
        <position position="11"/>
    </location>
    <ligand>
        <name>CTP</name>
        <dbReference type="ChEBI" id="CHEBI:37563"/>
    </ligand>
</feature>
<feature type="binding site" evidence="1">
    <location>
        <position position="21"/>
    </location>
    <ligand>
        <name>Mg(2+)</name>
        <dbReference type="ChEBI" id="CHEBI:18420"/>
    </ligand>
</feature>
<feature type="binding site" evidence="1">
    <location>
        <position position="23"/>
    </location>
    <ligand>
        <name>Mg(2+)</name>
        <dbReference type="ChEBI" id="CHEBI:18420"/>
    </ligand>
</feature>
<feature type="binding site" evidence="1">
    <location>
        <position position="91"/>
    </location>
    <ligand>
        <name>ATP</name>
        <dbReference type="ChEBI" id="CHEBI:30616"/>
    </ligand>
</feature>
<feature type="binding site" evidence="1">
    <location>
        <position position="91"/>
    </location>
    <ligand>
        <name>CTP</name>
        <dbReference type="ChEBI" id="CHEBI:37563"/>
    </ligand>
</feature>
<feature type="binding site" evidence="1">
    <location>
        <position position="137"/>
    </location>
    <ligand>
        <name>ATP</name>
        <dbReference type="ChEBI" id="CHEBI:30616"/>
    </ligand>
</feature>
<feature type="binding site" evidence="1">
    <location>
        <position position="137"/>
    </location>
    <ligand>
        <name>CTP</name>
        <dbReference type="ChEBI" id="CHEBI:37563"/>
    </ligand>
</feature>
<feature type="binding site" evidence="1">
    <location>
        <position position="140"/>
    </location>
    <ligand>
        <name>ATP</name>
        <dbReference type="ChEBI" id="CHEBI:30616"/>
    </ligand>
</feature>
<feature type="binding site" evidence="1">
    <location>
        <position position="140"/>
    </location>
    <ligand>
        <name>CTP</name>
        <dbReference type="ChEBI" id="CHEBI:37563"/>
    </ligand>
</feature>
<dbReference type="EC" id="2.7.7.72" evidence="1"/>
<dbReference type="EC" id="3.1.3.-" evidence="1"/>
<dbReference type="EC" id="3.1.4.-" evidence="1"/>
<dbReference type="EMBL" id="CP000076">
    <property type="protein sequence ID" value="AAY94849.1"/>
    <property type="molecule type" value="Genomic_DNA"/>
</dbReference>
<dbReference type="RefSeq" id="WP_011063834.1">
    <property type="nucleotide sequence ID" value="NC_004129.6"/>
</dbReference>
<dbReference type="SMR" id="Q4K4W8"/>
<dbReference type="STRING" id="220664.PFL_5656"/>
<dbReference type="KEGG" id="pfl:PFL_5656"/>
<dbReference type="PATRIC" id="fig|220664.5.peg.5768"/>
<dbReference type="eggNOG" id="COG0617">
    <property type="taxonomic scope" value="Bacteria"/>
</dbReference>
<dbReference type="HOGENOM" id="CLU_015961_1_1_6"/>
<dbReference type="Proteomes" id="UP000008540">
    <property type="component" value="Chromosome"/>
</dbReference>
<dbReference type="GO" id="GO:0005524">
    <property type="term" value="F:ATP binding"/>
    <property type="evidence" value="ECO:0007669"/>
    <property type="project" value="UniProtKB-UniRule"/>
</dbReference>
<dbReference type="GO" id="GO:0004810">
    <property type="term" value="F:CCA tRNA nucleotidyltransferase activity"/>
    <property type="evidence" value="ECO:0007669"/>
    <property type="project" value="UniProtKB-UniRule"/>
</dbReference>
<dbReference type="GO" id="GO:0004112">
    <property type="term" value="F:cyclic-nucleotide phosphodiesterase activity"/>
    <property type="evidence" value="ECO:0007669"/>
    <property type="project" value="UniProtKB-UniRule"/>
</dbReference>
<dbReference type="GO" id="GO:0000287">
    <property type="term" value="F:magnesium ion binding"/>
    <property type="evidence" value="ECO:0007669"/>
    <property type="project" value="UniProtKB-UniRule"/>
</dbReference>
<dbReference type="GO" id="GO:0016791">
    <property type="term" value="F:phosphatase activity"/>
    <property type="evidence" value="ECO:0007669"/>
    <property type="project" value="UniProtKB-UniRule"/>
</dbReference>
<dbReference type="GO" id="GO:0000049">
    <property type="term" value="F:tRNA binding"/>
    <property type="evidence" value="ECO:0007669"/>
    <property type="project" value="UniProtKB-UniRule"/>
</dbReference>
<dbReference type="GO" id="GO:0042245">
    <property type="term" value="P:RNA repair"/>
    <property type="evidence" value="ECO:0007669"/>
    <property type="project" value="UniProtKB-KW"/>
</dbReference>
<dbReference type="GO" id="GO:0001680">
    <property type="term" value="P:tRNA 3'-terminal CCA addition"/>
    <property type="evidence" value="ECO:0007669"/>
    <property type="project" value="UniProtKB-UniRule"/>
</dbReference>
<dbReference type="CDD" id="cd00077">
    <property type="entry name" value="HDc"/>
    <property type="match status" value="1"/>
</dbReference>
<dbReference type="CDD" id="cd05398">
    <property type="entry name" value="NT_ClassII-CCAase"/>
    <property type="match status" value="1"/>
</dbReference>
<dbReference type="FunFam" id="1.10.3090.10:FF:000001">
    <property type="entry name" value="Multifunctional CCA protein"/>
    <property type="match status" value="1"/>
</dbReference>
<dbReference type="FunFam" id="3.30.460.10:FF:000016">
    <property type="entry name" value="Multifunctional CCA protein"/>
    <property type="match status" value="1"/>
</dbReference>
<dbReference type="Gene3D" id="3.30.460.10">
    <property type="entry name" value="Beta Polymerase, domain 2"/>
    <property type="match status" value="1"/>
</dbReference>
<dbReference type="Gene3D" id="1.10.3090.10">
    <property type="entry name" value="cca-adding enzyme, domain 2"/>
    <property type="match status" value="1"/>
</dbReference>
<dbReference type="HAMAP" id="MF_01261">
    <property type="entry name" value="CCA_bact_type1"/>
    <property type="match status" value="1"/>
</dbReference>
<dbReference type="HAMAP" id="MF_01262">
    <property type="entry name" value="CCA_bact_type2"/>
    <property type="match status" value="1"/>
</dbReference>
<dbReference type="InterPro" id="IPR012006">
    <property type="entry name" value="CCA_bact"/>
</dbReference>
<dbReference type="InterPro" id="IPR003607">
    <property type="entry name" value="HD/PDEase_dom"/>
</dbReference>
<dbReference type="InterPro" id="IPR006674">
    <property type="entry name" value="HD_domain"/>
</dbReference>
<dbReference type="InterPro" id="IPR043519">
    <property type="entry name" value="NT_sf"/>
</dbReference>
<dbReference type="InterPro" id="IPR002646">
    <property type="entry name" value="PolA_pol_head_dom"/>
</dbReference>
<dbReference type="InterPro" id="IPR032828">
    <property type="entry name" value="PolyA_RNA-bd"/>
</dbReference>
<dbReference type="InterPro" id="IPR050124">
    <property type="entry name" value="tRNA_CCA-adding_enzyme"/>
</dbReference>
<dbReference type="NCBIfam" id="NF008137">
    <property type="entry name" value="PRK10885.1"/>
    <property type="match status" value="1"/>
</dbReference>
<dbReference type="PANTHER" id="PTHR47545">
    <property type="entry name" value="MULTIFUNCTIONAL CCA PROTEIN"/>
    <property type="match status" value="1"/>
</dbReference>
<dbReference type="PANTHER" id="PTHR47545:SF1">
    <property type="entry name" value="MULTIFUNCTIONAL CCA PROTEIN"/>
    <property type="match status" value="1"/>
</dbReference>
<dbReference type="Pfam" id="PF01966">
    <property type="entry name" value="HD"/>
    <property type="match status" value="1"/>
</dbReference>
<dbReference type="Pfam" id="PF01743">
    <property type="entry name" value="PolyA_pol"/>
    <property type="match status" value="1"/>
</dbReference>
<dbReference type="Pfam" id="PF12627">
    <property type="entry name" value="PolyA_pol_RNAbd"/>
    <property type="match status" value="1"/>
</dbReference>
<dbReference type="PIRSF" id="PIRSF000813">
    <property type="entry name" value="CCA_bact"/>
    <property type="match status" value="1"/>
</dbReference>
<dbReference type="SUPFAM" id="SSF81301">
    <property type="entry name" value="Nucleotidyltransferase"/>
    <property type="match status" value="1"/>
</dbReference>
<dbReference type="SUPFAM" id="SSF81891">
    <property type="entry name" value="Poly A polymerase C-terminal region-like"/>
    <property type="match status" value="1"/>
</dbReference>
<dbReference type="PROSITE" id="PS51831">
    <property type="entry name" value="HD"/>
    <property type="match status" value="1"/>
</dbReference>
<comment type="function">
    <text evidence="1">Catalyzes the addition and repair of the essential 3'-terminal CCA sequence in tRNAs without using a nucleic acid template. Adds these three nucleotides in the order of C, C, and A to the tRNA nucleotide-73, using CTP and ATP as substrates and producing inorganic pyrophosphate. tRNA 3'-terminal CCA addition is required both for tRNA processing and repair. Also involved in tRNA surveillance by mediating tandem CCA addition to generate a CCACCA at the 3' terminus of unstable tRNAs. While stable tRNAs receive only 3'-terminal CCA, unstable tRNAs are marked with CCACCA and rapidly degraded.</text>
</comment>
<comment type="catalytic activity">
    <reaction evidence="1">
        <text>a tRNA precursor + 2 CTP + ATP = a tRNA with a 3' CCA end + 3 diphosphate</text>
        <dbReference type="Rhea" id="RHEA:14433"/>
        <dbReference type="Rhea" id="RHEA-COMP:10465"/>
        <dbReference type="Rhea" id="RHEA-COMP:10468"/>
        <dbReference type="ChEBI" id="CHEBI:30616"/>
        <dbReference type="ChEBI" id="CHEBI:33019"/>
        <dbReference type="ChEBI" id="CHEBI:37563"/>
        <dbReference type="ChEBI" id="CHEBI:74896"/>
        <dbReference type="ChEBI" id="CHEBI:83071"/>
        <dbReference type="EC" id="2.7.7.72"/>
    </reaction>
</comment>
<comment type="catalytic activity">
    <reaction evidence="1">
        <text>a tRNA with a 3' CCA end + 2 CTP + ATP = a tRNA with a 3' CCACCA end + 3 diphosphate</text>
        <dbReference type="Rhea" id="RHEA:76235"/>
        <dbReference type="Rhea" id="RHEA-COMP:10468"/>
        <dbReference type="Rhea" id="RHEA-COMP:18655"/>
        <dbReference type="ChEBI" id="CHEBI:30616"/>
        <dbReference type="ChEBI" id="CHEBI:33019"/>
        <dbReference type="ChEBI" id="CHEBI:37563"/>
        <dbReference type="ChEBI" id="CHEBI:83071"/>
        <dbReference type="ChEBI" id="CHEBI:195187"/>
    </reaction>
    <physiologicalReaction direction="left-to-right" evidence="1">
        <dbReference type="Rhea" id="RHEA:76236"/>
    </physiologicalReaction>
</comment>
<comment type="cofactor">
    <cofactor evidence="1">
        <name>Mg(2+)</name>
        <dbReference type="ChEBI" id="CHEBI:18420"/>
    </cofactor>
    <text evidence="1">Magnesium is required for nucleotidyltransferase activity.</text>
</comment>
<comment type="cofactor">
    <cofactor evidence="1">
        <name>Ni(2+)</name>
        <dbReference type="ChEBI" id="CHEBI:49786"/>
    </cofactor>
    <text evidence="1">Nickel for phosphatase activity.</text>
</comment>
<comment type="subunit">
    <text evidence="1">Monomer. Can also form homodimers and oligomers.</text>
</comment>
<comment type="domain">
    <text evidence="1">Comprises two domains: an N-terminal domain containing the nucleotidyltransferase activity and a C-terminal HD domain associated with both phosphodiesterase and phosphatase activities.</text>
</comment>
<comment type="miscellaneous">
    <text evidence="1">A single active site specifically recognizes both ATP and CTP and is responsible for their addition.</text>
</comment>
<comment type="similarity">
    <text evidence="1">Belongs to the tRNA nucleotidyltransferase/poly(A) polymerase family. Bacterial CCA-adding enzyme type 1 subfamily.</text>
</comment>
<reference key="1">
    <citation type="journal article" date="2005" name="Nat. Biotechnol.">
        <title>Complete genome sequence of the plant commensal Pseudomonas fluorescens Pf-5.</title>
        <authorList>
            <person name="Paulsen I.T."/>
            <person name="Press C.M."/>
            <person name="Ravel J."/>
            <person name="Kobayashi D.Y."/>
            <person name="Myers G.S.A."/>
            <person name="Mavrodi D.V."/>
            <person name="DeBoy R.T."/>
            <person name="Seshadri R."/>
            <person name="Ren Q."/>
            <person name="Madupu R."/>
            <person name="Dodson R.J."/>
            <person name="Durkin A.S."/>
            <person name="Brinkac L.M."/>
            <person name="Daugherty S.C."/>
            <person name="Sullivan S.A."/>
            <person name="Rosovitz M.J."/>
            <person name="Gwinn M.L."/>
            <person name="Zhou L."/>
            <person name="Schneider D.J."/>
            <person name="Cartinhour S.W."/>
            <person name="Nelson W.C."/>
            <person name="Weidman J."/>
            <person name="Watkins K."/>
            <person name="Tran K."/>
            <person name="Khouri H."/>
            <person name="Pierson E.A."/>
            <person name="Pierson L.S. III"/>
            <person name="Thomashow L.S."/>
            <person name="Loper J.E."/>
        </authorList>
    </citation>
    <scope>NUCLEOTIDE SEQUENCE [LARGE SCALE GENOMIC DNA]</scope>
    <source>
        <strain>ATCC BAA-477 / NRRL B-23932 / Pf-5</strain>
    </source>
</reference>
<name>CCA_PSEF5</name>
<keyword id="KW-0067">ATP-binding</keyword>
<keyword id="KW-0378">Hydrolase</keyword>
<keyword id="KW-0460">Magnesium</keyword>
<keyword id="KW-0479">Metal-binding</keyword>
<keyword id="KW-0511">Multifunctional enzyme</keyword>
<keyword id="KW-0533">Nickel</keyword>
<keyword id="KW-0547">Nucleotide-binding</keyword>
<keyword id="KW-0548">Nucleotidyltransferase</keyword>
<keyword id="KW-0692">RNA repair</keyword>
<keyword id="KW-0694">RNA-binding</keyword>
<keyword id="KW-0808">Transferase</keyword>
<keyword id="KW-0819">tRNA processing</keyword>
<evidence type="ECO:0000255" key="1">
    <source>
        <dbReference type="HAMAP-Rule" id="MF_01261"/>
    </source>
</evidence>
<organism>
    <name type="scientific">Pseudomonas fluorescens (strain ATCC BAA-477 / NRRL B-23932 / Pf-5)</name>
    <dbReference type="NCBI Taxonomy" id="220664"/>
    <lineage>
        <taxon>Bacteria</taxon>
        <taxon>Pseudomonadati</taxon>
        <taxon>Pseudomonadota</taxon>
        <taxon>Gammaproteobacteria</taxon>
        <taxon>Pseudomonadales</taxon>
        <taxon>Pseudomonadaceae</taxon>
        <taxon>Pseudomonas</taxon>
    </lineage>
</organism>
<proteinExistence type="inferred from homology"/>
<accession>Q4K4W8</accession>
<gene>
    <name evidence="1" type="primary">cca</name>
    <name type="ordered locus">PFL_5656</name>
</gene>